<protein>
    <recommendedName>
        <fullName evidence="7">Zwei Ig domain protein zig-7</fullName>
    </recommendedName>
    <alternativeName>
        <fullName evidence="7">2 Ig domain protein zig-7</fullName>
    </alternativeName>
</protein>
<comment type="function">
    <text evidence="5 6">Probably not involved in maintaining the position of ASI and ASH head neuron cell bodies and ventral nerve cord axons of PVQ, PVP, RMEV, AVK and HSN neurons.</text>
</comment>
<comment type="subcellular location">
    <subcellularLocation>
        <location evidence="1">Secreted</location>
    </subcellularLocation>
</comment>
<comment type="tissue specificity">
    <text evidence="4">Expressed in body wall muscles.</text>
</comment>
<comment type="disruption phenotype">
    <text evidence="5 6">No visible phenotype (PubMed:19737747, PubMed:22829780). No defect in the positioning of ASI and ASH neuron cell bodies (PubMed:22829780). No defect in the positioning of PQV, PVP, RMEV, HSN and AVK axons in the ventral nerve cord (PubMed:19737747).</text>
</comment>
<reference evidence="9" key="1">
    <citation type="journal article" date="1998" name="Science">
        <title>Genome sequence of the nematode C. elegans: a platform for investigating biology.</title>
        <authorList>
            <consortium name="The C. elegans sequencing consortium"/>
        </authorList>
    </citation>
    <scope>NUCLEOTIDE SEQUENCE [LARGE SCALE GENOMIC DNA]</scope>
    <source>
        <strain evidence="9">Bristol N2</strain>
    </source>
</reference>
<reference evidence="8" key="2">
    <citation type="journal article" date="2002" name="Science">
        <title>Immunoglobulin-domain proteins required for maintenance of ventral nerve cord organization.</title>
        <authorList>
            <person name="Aurelio O."/>
            <person name="Hall D."/>
            <person name="Hobert O."/>
        </authorList>
    </citation>
    <scope>TISSUE SPECIFICITY</scope>
</reference>
<reference evidence="8" key="3">
    <citation type="journal article" date="2009" name="Genetics">
        <title>The small, secreted immunoglobulin protein ZIG-3 maintains axon position in Caenorhabditis elegans.</title>
        <authorList>
            <person name="Benard C."/>
            <person name="Tjoe N."/>
            <person name="Boulin T."/>
            <person name="Recio J."/>
            <person name="Hobert O."/>
        </authorList>
    </citation>
    <scope>FUNCTION</scope>
    <scope>DISRUPTION PHENOTYPE</scope>
</reference>
<reference evidence="8" key="4">
    <citation type="journal article" date="2012" name="PLoS Genet.">
        <title>The secreted immunoglobulin domain proteins ZIG-5 and ZIG-8 cooperate with L1CAM/SAX-7 to maintain nervous system integrity.</title>
        <authorList>
            <person name="Benard C.Y."/>
            <person name="Blanchette C."/>
            <person name="Recio J."/>
            <person name="Hobert O."/>
        </authorList>
    </citation>
    <scope>FUNCTION</scope>
    <scope>DISRUPTION PHENOTYPE</scope>
</reference>
<feature type="signal peptide" evidence="1">
    <location>
        <begin position="1"/>
        <end position="21"/>
    </location>
</feature>
<feature type="chain" id="PRO_5004158391" description="Zwei Ig domain protein zig-7">
    <location>
        <begin position="22"/>
        <end position="239"/>
    </location>
</feature>
<feature type="domain" description="Ig-like C2-type" evidence="2">
    <location>
        <begin position="145"/>
        <end position="211"/>
    </location>
</feature>
<feature type="glycosylation site" description="N-linked (GlcNAc...) asparagine" evidence="3">
    <location>
        <position position="43"/>
    </location>
</feature>
<feature type="disulfide bond" evidence="2">
    <location>
        <begin position="164"/>
        <end position="211"/>
    </location>
</feature>
<proteinExistence type="evidence at transcript level"/>
<keyword id="KW-1015">Disulfide bond</keyword>
<keyword id="KW-0325">Glycoprotein</keyword>
<keyword id="KW-0393">Immunoglobulin domain</keyword>
<keyword id="KW-1185">Reference proteome</keyword>
<keyword id="KW-0964">Secreted</keyword>
<keyword id="KW-0732">Signal</keyword>
<organism evidence="9">
    <name type="scientific">Caenorhabditis elegans</name>
    <dbReference type="NCBI Taxonomy" id="6239"/>
    <lineage>
        <taxon>Eukaryota</taxon>
        <taxon>Metazoa</taxon>
        <taxon>Ecdysozoa</taxon>
        <taxon>Nematoda</taxon>
        <taxon>Chromadorea</taxon>
        <taxon>Rhabditida</taxon>
        <taxon>Rhabditina</taxon>
        <taxon>Rhabditomorpha</taxon>
        <taxon>Rhabditoidea</taxon>
        <taxon>Rhabditidae</taxon>
        <taxon>Peloderinae</taxon>
        <taxon>Caenorhabditis</taxon>
    </lineage>
</organism>
<name>ZIG7_CAEEL</name>
<accession>O44730</accession>
<dbReference type="EMBL" id="BX284601">
    <property type="protein sequence ID" value="CCD68970.1"/>
    <property type="molecule type" value="Genomic_DNA"/>
</dbReference>
<dbReference type="RefSeq" id="NP_491451.2">
    <property type="nucleotide sequence ID" value="NM_059050.7"/>
</dbReference>
<dbReference type="SMR" id="O44730"/>
<dbReference type="STRING" id="6239.F54D7.4.1"/>
<dbReference type="GlyCosmos" id="O44730">
    <property type="glycosylation" value="1 site, No reported glycans"/>
</dbReference>
<dbReference type="PaxDb" id="6239-F54D7.4"/>
<dbReference type="PeptideAtlas" id="O44730"/>
<dbReference type="EnsemblMetazoa" id="F54D7.4.1">
    <property type="protein sequence ID" value="F54D7.4.1"/>
    <property type="gene ID" value="WBGene00006984"/>
</dbReference>
<dbReference type="GeneID" id="172096"/>
<dbReference type="KEGG" id="cel:CELE_F54D7.4"/>
<dbReference type="UCSC" id="F54D7.4">
    <property type="organism name" value="c. elegans"/>
</dbReference>
<dbReference type="AGR" id="WB:WBGene00006984"/>
<dbReference type="CTD" id="172096"/>
<dbReference type="WormBase" id="F54D7.4">
    <property type="protein sequence ID" value="CE33929"/>
    <property type="gene ID" value="WBGene00006984"/>
    <property type="gene designation" value="zig-7"/>
</dbReference>
<dbReference type="eggNOG" id="ENOG502S990">
    <property type="taxonomic scope" value="Eukaryota"/>
</dbReference>
<dbReference type="HOGENOM" id="CLU_1162045_0_0_1"/>
<dbReference type="InParanoid" id="O44730"/>
<dbReference type="OMA" id="RMVLECP"/>
<dbReference type="OrthoDB" id="5970915at2759"/>
<dbReference type="PhylomeDB" id="O44730"/>
<dbReference type="PRO" id="PR:O44730"/>
<dbReference type="Proteomes" id="UP000001940">
    <property type="component" value="Chromosome I"/>
</dbReference>
<dbReference type="Bgee" id="WBGene00006984">
    <property type="expression patterns" value="Expressed in larva and 4 other cell types or tissues"/>
</dbReference>
<dbReference type="GO" id="GO:0005576">
    <property type="term" value="C:extracellular region"/>
    <property type="evidence" value="ECO:0007669"/>
    <property type="project" value="UniProtKB-SubCell"/>
</dbReference>
<dbReference type="Gene3D" id="2.60.40.10">
    <property type="entry name" value="Immunoglobulins"/>
    <property type="match status" value="1"/>
</dbReference>
<dbReference type="InterPro" id="IPR007110">
    <property type="entry name" value="Ig-like_dom"/>
</dbReference>
<dbReference type="InterPro" id="IPR036179">
    <property type="entry name" value="Ig-like_dom_sf"/>
</dbReference>
<dbReference type="InterPro" id="IPR013783">
    <property type="entry name" value="Ig-like_fold"/>
</dbReference>
<dbReference type="InterPro" id="IPR003598">
    <property type="entry name" value="Ig_sub2"/>
</dbReference>
<dbReference type="InterPro" id="IPR052598">
    <property type="entry name" value="IgSF_CEA-related"/>
</dbReference>
<dbReference type="PANTHER" id="PTHR44337:SF20">
    <property type="entry name" value="CARCINOEMBRYONIC ANTIGEN-RELATED CELL ADHESION MOLECULE 5-RELATED"/>
    <property type="match status" value="1"/>
</dbReference>
<dbReference type="PANTHER" id="PTHR44337">
    <property type="entry name" value="CARCINOEMBRYONIC ANTIGEN-RELATED CELL ADHESION MOLECULE 8"/>
    <property type="match status" value="1"/>
</dbReference>
<dbReference type="Pfam" id="PF13927">
    <property type="entry name" value="Ig_3"/>
    <property type="match status" value="1"/>
</dbReference>
<dbReference type="SMART" id="SM00408">
    <property type="entry name" value="IGc2"/>
    <property type="match status" value="1"/>
</dbReference>
<dbReference type="SUPFAM" id="SSF48726">
    <property type="entry name" value="Immunoglobulin"/>
    <property type="match status" value="1"/>
</dbReference>
<dbReference type="PROSITE" id="PS50835">
    <property type="entry name" value="IG_LIKE"/>
    <property type="match status" value="1"/>
</dbReference>
<evidence type="ECO:0000255" key="1"/>
<evidence type="ECO:0000255" key="2">
    <source>
        <dbReference type="PROSITE-ProRule" id="PRU00114"/>
    </source>
</evidence>
<evidence type="ECO:0000255" key="3">
    <source>
        <dbReference type="PROSITE-ProRule" id="PRU00498"/>
    </source>
</evidence>
<evidence type="ECO:0000269" key="4">
    <source>
    </source>
</evidence>
<evidence type="ECO:0000269" key="5">
    <source>
    </source>
</evidence>
<evidence type="ECO:0000269" key="6">
    <source>
    </source>
</evidence>
<evidence type="ECO:0000303" key="7">
    <source>
    </source>
</evidence>
<evidence type="ECO:0000305" key="8"/>
<evidence type="ECO:0000312" key="9">
    <source>
        <dbReference type="Proteomes" id="UP000001940"/>
    </source>
</evidence>
<evidence type="ECO:0000312" key="10">
    <source>
        <dbReference type="WormBase" id="F54D7.4"/>
    </source>
</evidence>
<sequence length="239" mass="26386">MKLINCISIALLCTLVDFSSAEITVISNLAVVGSPESHVGTPNKTLYANIQNLWCGAQNLGEHIDVEYGEFTRLSDGKVFKGTVNQGKVYLEIGKASVKVAGRYRCEVRTLDKEIHSGNLIIYMPPVLDFPAAVRVSEVLNARPPHVIGAERRGLHGERMVLECPVLANPEPMVRWEKNGEPLGNSDSIEYDGNNLILNSLTEDHIGKYRCIGDNSFPLFVDGPAIPHQIYFDQDIKVL</sequence>
<gene>
    <name evidence="10" type="primary">zig-7</name>
    <name evidence="10" type="ORF">F54D7.4</name>
</gene>